<evidence type="ECO:0000255" key="1">
    <source>
        <dbReference type="HAMAP-Rule" id="MF_00239"/>
    </source>
</evidence>
<reference key="1">
    <citation type="journal article" date="2006" name="Science">
        <title>Genome of rice cluster I archaea -- the key methane producers in the rice rhizosphere.</title>
        <authorList>
            <person name="Erkel C."/>
            <person name="Kube M."/>
            <person name="Reinhardt R."/>
            <person name="Liesack W."/>
        </authorList>
    </citation>
    <scope>NUCLEOTIDE SEQUENCE [LARGE SCALE GENOMIC DNA]</scope>
    <source>
        <strain>DSM 22066 / NBRC 105507 / MRE50</strain>
    </source>
</reference>
<comment type="catalytic activity">
    <reaction evidence="1">
        <text>CMP + ATP = CDP + ADP</text>
        <dbReference type="Rhea" id="RHEA:11600"/>
        <dbReference type="ChEBI" id="CHEBI:30616"/>
        <dbReference type="ChEBI" id="CHEBI:58069"/>
        <dbReference type="ChEBI" id="CHEBI:60377"/>
        <dbReference type="ChEBI" id="CHEBI:456216"/>
        <dbReference type="EC" id="2.7.4.25"/>
    </reaction>
</comment>
<comment type="catalytic activity">
    <reaction evidence="1">
        <text>dCMP + ATP = dCDP + ADP</text>
        <dbReference type="Rhea" id="RHEA:25094"/>
        <dbReference type="ChEBI" id="CHEBI:30616"/>
        <dbReference type="ChEBI" id="CHEBI:57566"/>
        <dbReference type="ChEBI" id="CHEBI:58593"/>
        <dbReference type="ChEBI" id="CHEBI:456216"/>
        <dbReference type="EC" id="2.7.4.25"/>
    </reaction>
</comment>
<comment type="subcellular location">
    <subcellularLocation>
        <location evidence="1">Cytoplasm</location>
    </subcellularLocation>
</comment>
<comment type="similarity">
    <text evidence="1">Belongs to the cytidylate kinase family. Type 2 subfamily.</text>
</comment>
<accession>Q0W1W1</accession>
<protein>
    <recommendedName>
        <fullName evidence="1">Cytidylate kinase</fullName>
        <shortName evidence="1">CK</shortName>
        <ecNumber evidence="1">2.7.4.25</ecNumber>
    </recommendedName>
    <alternativeName>
        <fullName evidence="1">Cytidine monophosphate kinase</fullName>
        <shortName evidence="1">CMP kinase</shortName>
    </alternativeName>
</protein>
<keyword id="KW-0067">ATP-binding</keyword>
<keyword id="KW-0963">Cytoplasm</keyword>
<keyword id="KW-0418">Kinase</keyword>
<keyword id="KW-0547">Nucleotide-binding</keyword>
<keyword id="KW-1185">Reference proteome</keyword>
<keyword id="KW-0808">Transferase</keyword>
<gene>
    <name evidence="1" type="primary">cmk</name>
    <name type="ordered locus">UNCMA_06240</name>
    <name type="ORF">RCIX2574</name>
</gene>
<dbReference type="EC" id="2.7.4.25" evidence="1"/>
<dbReference type="EMBL" id="AM114193">
    <property type="protein sequence ID" value="CAJ37632.1"/>
    <property type="molecule type" value="Genomic_DNA"/>
</dbReference>
<dbReference type="RefSeq" id="WP_012034953.1">
    <property type="nucleotide sequence ID" value="NC_009464.1"/>
</dbReference>
<dbReference type="SMR" id="Q0W1W1"/>
<dbReference type="STRING" id="351160.RCIX2574"/>
<dbReference type="GeneID" id="5145374"/>
<dbReference type="KEGG" id="rci:RCIX2574"/>
<dbReference type="eggNOG" id="arCOG01037">
    <property type="taxonomic scope" value="Archaea"/>
</dbReference>
<dbReference type="OrthoDB" id="31096at2157"/>
<dbReference type="Proteomes" id="UP000000663">
    <property type="component" value="Chromosome"/>
</dbReference>
<dbReference type="GO" id="GO:0005737">
    <property type="term" value="C:cytoplasm"/>
    <property type="evidence" value="ECO:0007669"/>
    <property type="project" value="UniProtKB-SubCell"/>
</dbReference>
<dbReference type="GO" id="GO:0005524">
    <property type="term" value="F:ATP binding"/>
    <property type="evidence" value="ECO:0007669"/>
    <property type="project" value="UniProtKB-UniRule"/>
</dbReference>
<dbReference type="GO" id="GO:0036430">
    <property type="term" value="F:CMP kinase activity"/>
    <property type="evidence" value="ECO:0007669"/>
    <property type="project" value="RHEA"/>
</dbReference>
<dbReference type="GO" id="GO:0036431">
    <property type="term" value="F:dCMP kinase activity"/>
    <property type="evidence" value="ECO:0007669"/>
    <property type="project" value="RHEA"/>
</dbReference>
<dbReference type="GO" id="GO:0006220">
    <property type="term" value="P:pyrimidine nucleotide metabolic process"/>
    <property type="evidence" value="ECO:0007669"/>
    <property type="project" value="UniProtKB-UniRule"/>
</dbReference>
<dbReference type="CDD" id="cd02020">
    <property type="entry name" value="CMPK"/>
    <property type="match status" value="1"/>
</dbReference>
<dbReference type="Gene3D" id="3.40.50.300">
    <property type="entry name" value="P-loop containing nucleotide triphosphate hydrolases"/>
    <property type="match status" value="1"/>
</dbReference>
<dbReference type="HAMAP" id="MF_00239">
    <property type="entry name" value="Cytidyl_kinase_type2"/>
    <property type="match status" value="1"/>
</dbReference>
<dbReference type="InterPro" id="IPR011892">
    <property type="entry name" value="Cyt_kin_arch"/>
</dbReference>
<dbReference type="InterPro" id="IPR011994">
    <property type="entry name" value="Cytidylate_kinase_dom"/>
</dbReference>
<dbReference type="InterPro" id="IPR027417">
    <property type="entry name" value="P-loop_NTPase"/>
</dbReference>
<dbReference type="NCBIfam" id="TIGR02173">
    <property type="entry name" value="cyt_kin_arch"/>
    <property type="match status" value="1"/>
</dbReference>
<dbReference type="Pfam" id="PF13189">
    <property type="entry name" value="Cytidylate_kin2"/>
    <property type="match status" value="1"/>
</dbReference>
<dbReference type="SUPFAM" id="SSF52540">
    <property type="entry name" value="P-loop containing nucleoside triphosphate hydrolases"/>
    <property type="match status" value="1"/>
</dbReference>
<organism>
    <name type="scientific">Methanocella arvoryzae (strain DSM 22066 / NBRC 105507 / MRE50)</name>
    <dbReference type="NCBI Taxonomy" id="351160"/>
    <lineage>
        <taxon>Archaea</taxon>
        <taxon>Methanobacteriati</taxon>
        <taxon>Methanobacteriota</taxon>
        <taxon>Stenosarchaea group</taxon>
        <taxon>Methanomicrobia</taxon>
        <taxon>Methanocellales</taxon>
        <taxon>Methanocellaceae</taxon>
        <taxon>Methanocella</taxon>
    </lineage>
</organism>
<name>KCY_METAR</name>
<proteinExistence type="inferred from homology"/>
<feature type="chain" id="PRO_1000005687" description="Cytidylate kinase">
    <location>
        <begin position="1"/>
        <end position="175"/>
    </location>
</feature>
<feature type="binding site" evidence="1">
    <location>
        <begin position="7"/>
        <end position="15"/>
    </location>
    <ligand>
        <name>ATP</name>
        <dbReference type="ChEBI" id="CHEBI:30616"/>
    </ligand>
</feature>
<sequence>MIITLSGQPGSGKTSVAKELAEKYGFVVISAGEQFRKLAAERGMTLEEFGRLAENDPSIDLAIDQRQKELSRQFPNVLVEGRLAGRTIEADMRIWLKTPLRIRAERISNRENIPVHRAYDETHAREICELSRYKKYYDIDLTDLSCYDLVIDTSKWDAKGVSSIIFKAIDELKKA</sequence>